<gene>
    <name evidence="5" type="primary">alta1</name>
</gene>
<feature type="signal peptide" evidence="1">
    <location>
        <begin position="1" status="less than"/>
        <end position="11"/>
    </location>
</feature>
<feature type="chain" id="PRO_0000371795" description="Allergen Ulo b 1" evidence="1">
    <location>
        <begin position="12"/>
        <end position="137" status="greater than"/>
    </location>
</feature>
<feature type="domain" description="AA1-like" evidence="2">
    <location>
        <begin position="28"/>
        <end position="137" status="greater than"/>
    </location>
</feature>
<feature type="disulfide bond" description="Interchain" evidence="1">
    <location>
        <position position="23"/>
    </location>
</feature>
<feature type="disulfide bond" evidence="2">
    <location>
        <begin position="67"/>
        <end position="82"/>
    </location>
</feature>
<feature type="disulfide bond" evidence="2">
    <location>
        <begin position="121"/>
        <end position="133"/>
    </location>
</feature>
<feature type="non-terminal residue" evidence="5">
    <location>
        <position position="1"/>
    </location>
</feature>
<feature type="non-terminal residue" evidence="5">
    <location>
        <position position="137"/>
    </location>
</feature>
<sequence length="137" mass="14828">SLFAAAGLAAAAPLESRQDTASCPVSTQGDYVWKISEFYGRKPEGTYYNSLGFNIKATNGGTLDFTCSAQADKLEDHKWYSCGENSFMDFSFDSDRSGLLLKQKVSDDITYVATTTLPNYCRAGGNGPKDFVCQGVS</sequence>
<proteinExistence type="evidence at protein level"/>
<comment type="subunit">
    <text evidence="1">Homodimer; disulfide-linked.</text>
</comment>
<comment type="subcellular location">
    <subcellularLocation>
        <location evidence="4">Secreted</location>
    </subcellularLocation>
</comment>
<comment type="mass spectrometry" mass="11615.0" method="MALDI" evidence="4"/>
<comment type="allergen">
    <text evidence="4">Causes an allergic reaction in human. Binds to IgE.</text>
</comment>
<comment type="miscellaneous">
    <text evidence="4">On the 2D-gel the determined pI of this protein is: 4.0, its MW is: 18 kDa.</text>
</comment>
<comment type="similarity">
    <text evidence="1">Belongs to the ALTA1 family.</text>
</comment>
<dbReference type="EMBL" id="AY563317">
    <property type="protein sequence ID" value="AAT66608.1"/>
    <property type="molecule type" value="Genomic_DNA"/>
</dbReference>
<dbReference type="SMR" id="Q5EZ82"/>
<dbReference type="Allergome" id="2646">
    <property type="allergen name" value="Ulo b 1"/>
</dbReference>
<dbReference type="GO" id="GO:0005576">
    <property type="term" value="C:extracellular region"/>
    <property type="evidence" value="ECO:0007669"/>
    <property type="project" value="UniProtKB-SubCell"/>
</dbReference>
<dbReference type="CDD" id="cd12798">
    <property type="entry name" value="Alt_A1"/>
    <property type="match status" value="1"/>
</dbReference>
<dbReference type="Gene3D" id="2.40.350.20">
    <property type="match status" value="1"/>
</dbReference>
<dbReference type="InterPro" id="IPR032382">
    <property type="entry name" value="AltA1"/>
</dbReference>
<dbReference type="Pfam" id="PF16541">
    <property type="entry name" value="AltA1"/>
    <property type="match status" value="1"/>
</dbReference>
<dbReference type="PROSITE" id="PS51895">
    <property type="entry name" value="AA1"/>
    <property type="match status" value="1"/>
</dbReference>
<name>ALTA1_ALTBO</name>
<protein>
    <recommendedName>
        <fullName>Allergen Ulo b 1</fullName>
    </recommendedName>
    <alternativeName>
        <fullName>Alt a 1-like protein</fullName>
    </alternativeName>
    <allergenName>Ulo b 1</allergenName>
</protein>
<reference evidence="5" key="1">
    <citation type="journal article" date="2005" name="Fungal Genet. Biol.">
        <title>Alt a 1 allergen homologs from Alternaria and related taxa: analysis of phylogenetic content and secondary structure.</title>
        <authorList>
            <person name="Hong S.G."/>
            <person name="Cramer R.A."/>
            <person name="Lawrence C.B."/>
            <person name="Pryor B.M."/>
        </authorList>
    </citation>
    <scope>NUCLEOTIDE SEQUENCE [GENOMIC DNA]</scope>
    <source>
        <strain evidence="3">ATCC 18043 / CBS 198.67 / QM 8619</strain>
    </source>
</reference>
<reference key="2">
    <citation type="journal article" date="2011" name="Med. Mycol.">
        <title>Identification of allergens homologous to Alt a 1 from Stemphylium botryosum and Ulocladium botrytis.</title>
        <authorList>
            <person name="Gutierrez-Rodriguez A."/>
            <person name="Postigo I."/>
            <person name="Guisantes J.A."/>
            <person name="Sunen E."/>
            <person name="Martinez J."/>
        </authorList>
    </citation>
    <scope>PROTEIN SEQUENCE OF 35-56</scope>
    <scope>SUBCELLULAR LOCATION</scope>
    <scope>MASS SPECTROMETRY</scope>
    <scope>ALLERGEN</scope>
    <source>
        <strain evidence="4">FMR5819</strain>
    </source>
</reference>
<accession>Q5EZ82</accession>
<evidence type="ECO:0000250" key="1">
    <source>
        <dbReference type="UniProtKB" id="P79085"/>
    </source>
</evidence>
<evidence type="ECO:0000255" key="2">
    <source>
        <dbReference type="PROSITE-ProRule" id="PRU01243"/>
    </source>
</evidence>
<evidence type="ECO:0000269" key="3">
    <source>
    </source>
</evidence>
<evidence type="ECO:0000269" key="4">
    <source>
    </source>
</evidence>
<evidence type="ECO:0000312" key="5">
    <source>
        <dbReference type="EMBL" id="AAT66608.1"/>
    </source>
</evidence>
<organism>
    <name type="scientific">Alternaria botrytis</name>
    <name type="common">Ulocladium botrytis</name>
    <dbReference type="NCBI Taxonomy" id="119956"/>
    <lineage>
        <taxon>Eukaryota</taxon>
        <taxon>Fungi</taxon>
        <taxon>Dikarya</taxon>
        <taxon>Ascomycota</taxon>
        <taxon>Pezizomycotina</taxon>
        <taxon>Dothideomycetes</taxon>
        <taxon>Pleosporomycetidae</taxon>
        <taxon>Pleosporales</taxon>
        <taxon>Pleosporineae</taxon>
        <taxon>Pleosporaceae</taxon>
        <taxon>Alternaria</taxon>
        <taxon>Alternaria sect. Ulocladium</taxon>
    </lineage>
</organism>
<keyword id="KW-0020">Allergen</keyword>
<keyword id="KW-0903">Direct protein sequencing</keyword>
<keyword id="KW-1015">Disulfide bond</keyword>
<keyword id="KW-0964">Secreted</keyword>
<keyword id="KW-0732">Signal</keyword>